<gene>
    <name type="ordered locus">RBAM_003480</name>
</gene>
<reference key="1">
    <citation type="journal article" date="2007" name="Nat. Biotechnol.">
        <title>Comparative analysis of the complete genome sequence of the plant growth-promoting bacterium Bacillus amyloliquefaciens FZB42.</title>
        <authorList>
            <person name="Chen X.H."/>
            <person name="Koumoutsi A."/>
            <person name="Scholz R."/>
            <person name="Eisenreich A."/>
            <person name="Schneider K."/>
            <person name="Heinemeyer I."/>
            <person name="Morgenstern B."/>
            <person name="Voss B."/>
            <person name="Hess W.R."/>
            <person name="Reva O."/>
            <person name="Junge H."/>
            <person name="Voigt B."/>
            <person name="Jungblut P.R."/>
            <person name="Vater J."/>
            <person name="Suessmuth R."/>
            <person name="Liesegang H."/>
            <person name="Strittmatter A."/>
            <person name="Gottschalk G."/>
            <person name="Borriss R."/>
        </authorList>
    </citation>
    <scope>NUCLEOTIDE SEQUENCE [LARGE SCALE GENOMIC DNA]</scope>
    <source>
        <strain>DSM 23117 / BGSC 10A6 / LMG 26770 / FZB42</strain>
    </source>
</reference>
<keyword id="KW-0274">FAD</keyword>
<keyword id="KW-0285">Flavoprotein</keyword>
<keyword id="KW-0521">NADP</keyword>
<keyword id="KW-0560">Oxidoreductase</keyword>
<comment type="catalytic activity">
    <reaction evidence="1">
        <text>2 reduced [2Fe-2S]-[ferredoxin] + NADP(+) + H(+) = 2 oxidized [2Fe-2S]-[ferredoxin] + NADPH</text>
        <dbReference type="Rhea" id="RHEA:20125"/>
        <dbReference type="Rhea" id="RHEA-COMP:10000"/>
        <dbReference type="Rhea" id="RHEA-COMP:10001"/>
        <dbReference type="ChEBI" id="CHEBI:15378"/>
        <dbReference type="ChEBI" id="CHEBI:33737"/>
        <dbReference type="ChEBI" id="CHEBI:33738"/>
        <dbReference type="ChEBI" id="CHEBI:57783"/>
        <dbReference type="ChEBI" id="CHEBI:58349"/>
        <dbReference type="EC" id="1.18.1.2"/>
    </reaction>
</comment>
<comment type="cofactor">
    <cofactor evidence="1">
        <name>FAD</name>
        <dbReference type="ChEBI" id="CHEBI:57692"/>
    </cofactor>
    <text evidence="1">Binds 1 FAD per subunit.</text>
</comment>
<comment type="subunit">
    <text evidence="1">Homodimer.</text>
</comment>
<comment type="similarity">
    <text evidence="1">Belongs to the ferredoxin--NADP reductase type 2 family.</text>
</comment>
<organism>
    <name type="scientific">Bacillus velezensis (strain DSM 23117 / BGSC 10A6 / LMG 26770 / FZB42)</name>
    <name type="common">Bacillus amyloliquefaciens subsp. plantarum</name>
    <dbReference type="NCBI Taxonomy" id="326423"/>
    <lineage>
        <taxon>Bacteria</taxon>
        <taxon>Bacillati</taxon>
        <taxon>Bacillota</taxon>
        <taxon>Bacilli</taxon>
        <taxon>Bacillales</taxon>
        <taxon>Bacillaceae</taxon>
        <taxon>Bacillus</taxon>
        <taxon>Bacillus amyloliquefaciens group</taxon>
    </lineage>
</organism>
<dbReference type="EC" id="1.18.1.2" evidence="1"/>
<dbReference type="EMBL" id="CP000560">
    <property type="protein sequence ID" value="ABS72747.1"/>
    <property type="molecule type" value="Genomic_DNA"/>
</dbReference>
<dbReference type="RefSeq" id="WP_011996304.1">
    <property type="nucleotide sequence ID" value="NC_009725.2"/>
</dbReference>
<dbReference type="SMR" id="A7Z171"/>
<dbReference type="GeneID" id="93079486"/>
<dbReference type="KEGG" id="bay:RBAM_003480"/>
<dbReference type="HOGENOM" id="CLU_031864_5_5_9"/>
<dbReference type="Proteomes" id="UP000001120">
    <property type="component" value="Chromosome"/>
</dbReference>
<dbReference type="GO" id="GO:0004324">
    <property type="term" value="F:ferredoxin-NADP+ reductase activity"/>
    <property type="evidence" value="ECO:0007669"/>
    <property type="project" value="UniProtKB-UniRule"/>
</dbReference>
<dbReference type="GO" id="GO:0050660">
    <property type="term" value="F:flavin adenine dinucleotide binding"/>
    <property type="evidence" value="ECO:0007669"/>
    <property type="project" value="UniProtKB-UniRule"/>
</dbReference>
<dbReference type="GO" id="GO:0050661">
    <property type="term" value="F:NADP binding"/>
    <property type="evidence" value="ECO:0007669"/>
    <property type="project" value="UniProtKB-UniRule"/>
</dbReference>
<dbReference type="Gene3D" id="3.50.50.60">
    <property type="entry name" value="FAD/NAD(P)-binding domain"/>
    <property type="match status" value="2"/>
</dbReference>
<dbReference type="HAMAP" id="MF_01685">
    <property type="entry name" value="FENR2"/>
    <property type="match status" value="1"/>
</dbReference>
<dbReference type="InterPro" id="IPR036188">
    <property type="entry name" value="FAD/NAD-bd_sf"/>
</dbReference>
<dbReference type="InterPro" id="IPR023753">
    <property type="entry name" value="FAD/NAD-binding_dom"/>
</dbReference>
<dbReference type="InterPro" id="IPR022890">
    <property type="entry name" value="Fd--NADP_Rdtase_type_2"/>
</dbReference>
<dbReference type="InterPro" id="IPR050097">
    <property type="entry name" value="Ferredoxin-NADP_redctase_2"/>
</dbReference>
<dbReference type="PANTHER" id="PTHR48105">
    <property type="entry name" value="THIOREDOXIN REDUCTASE 1-RELATED-RELATED"/>
    <property type="match status" value="1"/>
</dbReference>
<dbReference type="Pfam" id="PF07992">
    <property type="entry name" value="Pyr_redox_2"/>
    <property type="match status" value="1"/>
</dbReference>
<dbReference type="PRINTS" id="PR00368">
    <property type="entry name" value="FADPNR"/>
</dbReference>
<dbReference type="PRINTS" id="PR00469">
    <property type="entry name" value="PNDRDTASEII"/>
</dbReference>
<dbReference type="SUPFAM" id="SSF51905">
    <property type="entry name" value="FAD/NAD(P)-binding domain"/>
    <property type="match status" value="1"/>
</dbReference>
<proteinExistence type="inferred from homology"/>
<sequence>MAENHEVYDVTIIGGGPIGLFAAFYCGMRELKTKVIEFLPRLGGKVSMFFPEKIIRDIGGIPGIAGEQLITQLKEQAATFKPDIVLNQRVTGFERLEDGTIVLESSEGEKHYTRTVILAVGMGTLEVNELDSADASRYSGKNLHYKVEKLDAFRDKHVVISGGGDTAVDWANELEPIAASVTVLHRREEFGGLESSVAKMKRSSVRVLAPYRLKHLNGTGERIESVTICQTESGLSEVIKLDELVINHGFKIDLGPMKDWGLEIEEGRIKADRHMRTNLPGVFVAGDAAHYESKLRLIAGGFTEGPTAVNSAKAYLDPQADQMAMYSTHHKKLVTQ</sequence>
<accession>A7Z171</accession>
<feature type="chain" id="PRO_0000364784" description="Ferredoxin--NADP reductase 1">
    <location>
        <begin position="1"/>
        <end position="336"/>
    </location>
</feature>
<feature type="binding site" evidence="1">
    <location>
        <position position="37"/>
    </location>
    <ligand>
        <name>FAD</name>
        <dbReference type="ChEBI" id="CHEBI:57692"/>
    </ligand>
</feature>
<feature type="binding site" evidence="1">
    <location>
        <position position="45"/>
    </location>
    <ligand>
        <name>FAD</name>
        <dbReference type="ChEBI" id="CHEBI:57692"/>
    </ligand>
</feature>
<feature type="binding site" evidence="1">
    <location>
        <position position="50"/>
    </location>
    <ligand>
        <name>FAD</name>
        <dbReference type="ChEBI" id="CHEBI:57692"/>
    </ligand>
</feature>
<feature type="binding site" evidence="1">
    <location>
        <position position="90"/>
    </location>
    <ligand>
        <name>FAD</name>
        <dbReference type="ChEBI" id="CHEBI:57692"/>
    </ligand>
</feature>
<feature type="binding site" evidence="1">
    <location>
        <position position="125"/>
    </location>
    <ligand>
        <name>FAD</name>
        <dbReference type="ChEBI" id="CHEBI:57692"/>
    </ligand>
</feature>
<feature type="binding site" evidence="1">
    <location>
        <position position="287"/>
    </location>
    <ligand>
        <name>FAD</name>
        <dbReference type="ChEBI" id="CHEBI:57692"/>
    </ligand>
</feature>
<feature type="binding site" evidence="1">
    <location>
        <position position="328"/>
    </location>
    <ligand>
        <name>FAD</name>
        <dbReference type="ChEBI" id="CHEBI:57692"/>
    </ligand>
</feature>
<protein>
    <recommendedName>
        <fullName evidence="1">Ferredoxin--NADP reductase 1</fullName>
        <shortName evidence="1">FNR 1</shortName>
        <shortName evidence="1">Fd-NADP(+) reductase 1</shortName>
        <ecNumber evidence="1">1.18.1.2</ecNumber>
    </recommendedName>
</protein>
<evidence type="ECO:0000255" key="1">
    <source>
        <dbReference type="HAMAP-Rule" id="MF_01685"/>
    </source>
</evidence>
<name>FENR1_BACVZ</name>